<protein>
    <recommendedName>
        <fullName evidence="1">DNA-directed RNA polymerase subunit beta'</fullName>
        <shortName evidence="1">RNAP subunit beta'</shortName>
        <ecNumber evidence="1">2.7.7.6</ecNumber>
    </recommendedName>
    <alternativeName>
        <fullName evidence="1">RNA polymerase subunit beta'</fullName>
    </alternativeName>
    <alternativeName>
        <fullName evidence="1">Transcriptase subunit beta'</fullName>
    </alternativeName>
</protein>
<organism>
    <name type="scientific">Clavibacter michiganensis subsp. michiganensis (strain NCPPB 382)</name>
    <dbReference type="NCBI Taxonomy" id="443906"/>
    <lineage>
        <taxon>Bacteria</taxon>
        <taxon>Bacillati</taxon>
        <taxon>Actinomycetota</taxon>
        <taxon>Actinomycetes</taxon>
        <taxon>Micrococcales</taxon>
        <taxon>Microbacteriaceae</taxon>
        <taxon>Clavibacter</taxon>
    </lineage>
</organism>
<proteinExistence type="inferred from homology"/>
<feature type="chain" id="PRO_0000308829" description="DNA-directed RNA polymerase subunit beta'">
    <location>
        <begin position="1"/>
        <end position="1299"/>
    </location>
</feature>
<feature type="region of interest" description="Disordered" evidence="2">
    <location>
        <begin position="188"/>
        <end position="209"/>
    </location>
</feature>
<feature type="binding site" evidence="1">
    <location>
        <position position="60"/>
    </location>
    <ligand>
        <name>Zn(2+)</name>
        <dbReference type="ChEBI" id="CHEBI:29105"/>
        <label>1</label>
    </ligand>
</feature>
<feature type="binding site" evidence="1">
    <location>
        <position position="62"/>
    </location>
    <ligand>
        <name>Zn(2+)</name>
        <dbReference type="ChEBI" id="CHEBI:29105"/>
        <label>1</label>
    </ligand>
</feature>
<feature type="binding site" evidence="1">
    <location>
        <position position="75"/>
    </location>
    <ligand>
        <name>Zn(2+)</name>
        <dbReference type="ChEBI" id="CHEBI:29105"/>
        <label>1</label>
    </ligand>
</feature>
<feature type="binding site" evidence="1">
    <location>
        <position position="78"/>
    </location>
    <ligand>
        <name>Zn(2+)</name>
        <dbReference type="ChEBI" id="CHEBI:29105"/>
        <label>1</label>
    </ligand>
</feature>
<feature type="binding site" evidence="1">
    <location>
        <position position="535"/>
    </location>
    <ligand>
        <name>Mg(2+)</name>
        <dbReference type="ChEBI" id="CHEBI:18420"/>
    </ligand>
</feature>
<feature type="binding site" evidence="1">
    <location>
        <position position="537"/>
    </location>
    <ligand>
        <name>Mg(2+)</name>
        <dbReference type="ChEBI" id="CHEBI:18420"/>
    </ligand>
</feature>
<feature type="binding site" evidence="1">
    <location>
        <position position="539"/>
    </location>
    <ligand>
        <name>Mg(2+)</name>
        <dbReference type="ChEBI" id="CHEBI:18420"/>
    </ligand>
</feature>
<feature type="binding site" evidence="1">
    <location>
        <position position="882"/>
    </location>
    <ligand>
        <name>Zn(2+)</name>
        <dbReference type="ChEBI" id="CHEBI:29105"/>
        <label>2</label>
    </ligand>
</feature>
<feature type="binding site" evidence="1">
    <location>
        <position position="959"/>
    </location>
    <ligand>
        <name>Zn(2+)</name>
        <dbReference type="ChEBI" id="CHEBI:29105"/>
        <label>2</label>
    </ligand>
</feature>
<feature type="binding site" evidence="1">
    <location>
        <position position="966"/>
    </location>
    <ligand>
        <name>Zn(2+)</name>
        <dbReference type="ChEBI" id="CHEBI:29105"/>
        <label>2</label>
    </ligand>
</feature>
<feature type="binding site" evidence="1">
    <location>
        <position position="969"/>
    </location>
    <ligand>
        <name>Zn(2+)</name>
        <dbReference type="ChEBI" id="CHEBI:29105"/>
        <label>2</label>
    </ligand>
</feature>
<sequence length="1299" mass="143266">MLDVTTFDELRIGLATADDIRRWSHGEVKKPETINYRTLKPEKDGLFGEQIFGPSRDWECSCGKYKRVRFKGIVCERCGVEVTKSAVRRERMGHIELAAPVTHIWYFKGVPSRLGYLLDMAPKDLEKVIYFAAYMVISVDEDARHEDMPGLENELRLEIKTLQDQRDSQIAERLGRLETDLAALEAEGAKSDQKRRAKDGAEKEMGQTRKAFDEDISRLERVWEEFRSLKVGELKPEDAVFHELQDRFGIYFEAHMGAEAIQKRLEAFDLEAEGELLREQIATGKGQKKIRAIKRLRVVSSFLATGNSPAAMVLQVVPVIPPELRPMVQLDGGRFATSDLNDLYRRVINRNNRLRRLLDLGAPEIIVNNEKRMLQEAVDALFDNGRRGRPVTGTGNRALKSLSDMLKGKQGRFRQNLLGKRVDYSGRSVIIVGPQLKLHQCGLPKQMALELFKPFVIKRLIDLSHAQNIKAAKRMVERSRGQVWDVLEEIIRERPVLLNRAPTLHRLGIQAFEPQLVEGKAIQLHPLVCAAFNADFDGDQMAVHLPLSVEAQAEARILMLASNNILKPSDGRPVTLPTQDMIIGLHHLTTLKEGVAGEGRAFSSVAEAILAKDQLSLDLNAKVRIRLHDIYFGEGEAPEGVELDEKGKTVGPVLLETTLGRALFNETLPVDYPYIEAVADKGKLSEIVNDLAERYPKVEVAAALDRIKDAGFYWATRSGVTVALSDVLTPPTKAAILSGYEKQAAKVQGQFEKGLTTNAERRQELIEIWNKATAEVAKAMEDNLPADNNINRMVSSGARGNWMQVRQIAGMRGLVSNPKGEIIPRPIVHSYREGLTVAEYFISTHGARKGLADTALRTADSGYLTRRLVDVSQDVIIREDDCGTGRGLDLPIATKGADGSSVRDSNVENSVYARSLAADAVNEAGEVVAPAGSDVGDVMIDHLIAAGVHEIKVRSVLTCESAVGVCAACYGRSLATGKLVDIGEAVGIIAAQSIGEPGTQLTMRTFHTGGVASADDITQGLPRVQELFEARTPKGASPIAEAAGRITIEDTDRSRKVILTPDNGDEPHIYPVLKRATLLVEDGQHVELGQQLHVGAIDPKEVLRVKGVREVQKHLVGGVQGVYRSQGVPIHDKHIEVIVRQMLRKVTVVEHGDTDLLPGELVDRARYNEVNRATLTEGKKTASARQEVMGITKASLATESWLSAASFQETTRVLTQAAMEGKSDPLMGLKENVIIGKLIPAGTGLAKYRDVTVTATEEAKAERYPNRIFTDESVFNESDLSFVDFDSFSSDDYTPGTYN</sequence>
<name>RPOC_CLAM3</name>
<gene>
    <name evidence="1" type="primary">rpoC</name>
    <name type="ordered locus">CMM_2630</name>
</gene>
<dbReference type="EC" id="2.7.7.6" evidence="1"/>
<dbReference type="EMBL" id="AM711867">
    <property type="protein sequence ID" value="CAN02713.1"/>
    <property type="molecule type" value="Genomic_DNA"/>
</dbReference>
<dbReference type="RefSeq" id="WP_012039319.1">
    <property type="nucleotide sequence ID" value="NC_009480.1"/>
</dbReference>
<dbReference type="SMR" id="A5CUC6"/>
<dbReference type="KEGG" id="cmi:CMM_2630"/>
<dbReference type="eggNOG" id="COG0086">
    <property type="taxonomic scope" value="Bacteria"/>
</dbReference>
<dbReference type="HOGENOM" id="CLU_000524_3_1_11"/>
<dbReference type="OrthoDB" id="9815296at2"/>
<dbReference type="Proteomes" id="UP000001564">
    <property type="component" value="Chromosome"/>
</dbReference>
<dbReference type="GO" id="GO:0000428">
    <property type="term" value="C:DNA-directed RNA polymerase complex"/>
    <property type="evidence" value="ECO:0007669"/>
    <property type="project" value="UniProtKB-KW"/>
</dbReference>
<dbReference type="GO" id="GO:0003677">
    <property type="term" value="F:DNA binding"/>
    <property type="evidence" value="ECO:0007669"/>
    <property type="project" value="UniProtKB-UniRule"/>
</dbReference>
<dbReference type="GO" id="GO:0003899">
    <property type="term" value="F:DNA-directed RNA polymerase activity"/>
    <property type="evidence" value="ECO:0007669"/>
    <property type="project" value="UniProtKB-UniRule"/>
</dbReference>
<dbReference type="GO" id="GO:0000287">
    <property type="term" value="F:magnesium ion binding"/>
    <property type="evidence" value="ECO:0007669"/>
    <property type="project" value="UniProtKB-UniRule"/>
</dbReference>
<dbReference type="GO" id="GO:0008270">
    <property type="term" value="F:zinc ion binding"/>
    <property type="evidence" value="ECO:0007669"/>
    <property type="project" value="UniProtKB-UniRule"/>
</dbReference>
<dbReference type="GO" id="GO:0006351">
    <property type="term" value="P:DNA-templated transcription"/>
    <property type="evidence" value="ECO:0007669"/>
    <property type="project" value="UniProtKB-UniRule"/>
</dbReference>
<dbReference type="CDD" id="cd02655">
    <property type="entry name" value="RNAP_beta'_C"/>
    <property type="match status" value="1"/>
</dbReference>
<dbReference type="CDD" id="cd01609">
    <property type="entry name" value="RNAP_beta'_N"/>
    <property type="match status" value="1"/>
</dbReference>
<dbReference type="FunFam" id="1.10.150.390:FF:000002">
    <property type="entry name" value="DNA-directed RNA polymerase subunit beta"/>
    <property type="match status" value="1"/>
</dbReference>
<dbReference type="FunFam" id="1.10.40.90:FF:000001">
    <property type="entry name" value="DNA-directed RNA polymerase subunit beta"/>
    <property type="match status" value="1"/>
</dbReference>
<dbReference type="FunFam" id="4.10.860.120:FF:000001">
    <property type="entry name" value="DNA-directed RNA polymerase subunit beta"/>
    <property type="match status" value="1"/>
</dbReference>
<dbReference type="Gene3D" id="1.10.132.30">
    <property type="match status" value="1"/>
</dbReference>
<dbReference type="Gene3D" id="1.10.150.390">
    <property type="match status" value="1"/>
</dbReference>
<dbReference type="Gene3D" id="1.10.1790.20">
    <property type="match status" value="1"/>
</dbReference>
<dbReference type="Gene3D" id="1.10.40.90">
    <property type="match status" value="1"/>
</dbReference>
<dbReference type="Gene3D" id="2.40.40.20">
    <property type="match status" value="1"/>
</dbReference>
<dbReference type="Gene3D" id="2.40.50.100">
    <property type="match status" value="1"/>
</dbReference>
<dbReference type="Gene3D" id="4.10.860.120">
    <property type="entry name" value="RNA polymerase II, clamp domain"/>
    <property type="match status" value="1"/>
</dbReference>
<dbReference type="Gene3D" id="1.10.274.100">
    <property type="entry name" value="RNA polymerase Rpb1, domain 3"/>
    <property type="match status" value="1"/>
</dbReference>
<dbReference type="HAMAP" id="MF_01322">
    <property type="entry name" value="RNApol_bact_RpoC"/>
    <property type="match status" value="1"/>
</dbReference>
<dbReference type="InterPro" id="IPR045867">
    <property type="entry name" value="DNA-dir_RpoC_beta_prime"/>
</dbReference>
<dbReference type="InterPro" id="IPR012754">
    <property type="entry name" value="DNA-dir_RpoC_beta_prime_bact"/>
</dbReference>
<dbReference type="InterPro" id="IPR000722">
    <property type="entry name" value="RNA_pol_asu"/>
</dbReference>
<dbReference type="InterPro" id="IPR006592">
    <property type="entry name" value="RNA_pol_N"/>
</dbReference>
<dbReference type="InterPro" id="IPR007080">
    <property type="entry name" value="RNA_pol_Rpb1_1"/>
</dbReference>
<dbReference type="InterPro" id="IPR007066">
    <property type="entry name" value="RNA_pol_Rpb1_3"/>
</dbReference>
<dbReference type="InterPro" id="IPR042102">
    <property type="entry name" value="RNA_pol_Rpb1_3_sf"/>
</dbReference>
<dbReference type="InterPro" id="IPR007083">
    <property type="entry name" value="RNA_pol_Rpb1_4"/>
</dbReference>
<dbReference type="InterPro" id="IPR007081">
    <property type="entry name" value="RNA_pol_Rpb1_5"/>
</dbReference>
<dbReference type="InterPro" id="IPR044893">
    <property type="entry name" value="RNA_pol_Rpb1_clamp_domain"/>
</dbReference>
<dbReference type="InterPro" id="IPR038120">
    <property type="entry name" value="Rpb1_funnel_sf"/>
</dbReference>
<dbReference type="NCBIfam" id="NF011498">
    <property type="entry name" value="PRK14906.1"/>
    <property type="match status" value="1"/>
</dbReference>
<dbReference type="NCBIfam" id="TIGR02386">
    <property type="entry name" value="rpoC_TIGR"/>
    <property type="match status" value="1"/>
</dbReference>
<dbReference type="PANTHER" id="PTHR19376">
    <property type="entry name" value="DNA-DIRECTED RNA POLYMERASE"/>
    <property type="match status" value="1"/>
</dbReference>
<dbReference type="PANTHER" id="PTHR19376:SF54">
    <property type="entry name" value="DNA-DIRECTED RNA POLYMERASE SUBUNIT BETA"/>
    <property type="match status" value="1"/>
</dbReference>
<dbReference type="Pfam" id="PF04997">
    <property type="entry name" value="RNA_pol_Rpb1_1"/>
    <property type="match status" value="1"/>
</dbReference>
<dbReference type="Pfam" id="PF00623">
    <property type="entry name" value="RNA_pol_Rpb1_2"/>
    <property type="match status" value="2"/>
</dbReference>
<dbReference type="Pfam" id="PF04983">
    <property type="entry name" value="RNA_pol_Rpb1_3"/>
    <property type="match status" value="1"/>
</dbReference>
<dbReference type="Pfam" id="PF05000">
    <property type="entry name" value="RNA_pol_Rpb1_4"/>
    <property type="match status" value="1"/>
</dbReference>
<dbReference type="Pfam" id="PF04998">
    <property type="entry name" value="RNA_pol_Rpb1_5"/>
    <property type="match status" value="1"/>
</dbReference>
<dbReference type="SMART" id="SM00663">
    <property type="entry name" value="RPOLA_N"/>
    <property type="match status" value="1"/>
</dbReference>
<dbReference type="SUPFAM" id="SSF64484">
    <property type="entry name" value="beta and beta-prime subunits of DNA dependent RNA-polymerase"/>
    <property type="match status" value="1"/>
</dbReference>
<evidence type="ECO:0000255" key="1">
    <source>
        <dbReference type="HAMAP-Rule" id="MF_01322"/>
    </source>
</evidence>
<evidence type="ECO:0000256" key="2">
    <source>
        <dbReference type="SAM" id="MobiDB-lite"/>
    </source>
</evidence>
<comment type="function">
    <text evidence="1">DNA-dependent RNA polymerase catalyzes the transcription of DNA into RNA using the four ribonucleoside triphosphates as substrates.</text>
</comment>
<comment type="catalytic activity">
    <reaction evidence="1">
        <text>RNA(n) + a ribonucleoside 5'-triphosphate = RNA(n+1) + diphosphate</text>
        <dbReference type="Rhea" id="RHEA:21248"/>
        <dbReference type="Rhea" id="RHEA-COMP:14527"/>
        <dbReference type="Rhea" id="RHEA-COMP:17342"/>
        <dbReference type="ChEBI" id="CHEBI:33019"/>
        <dbReference type="ChEBI" id="CHEBI:61557"/>
        <dbReference type="ChEBI" id="CHEBI:140395"/>
        <dbReference type="EC" id="2.7.7.6"/>
    </reaction>
</comment>
<comment type="cofactor">
    <cofactor evidence="1">
        <name>Mg(2+)</name>
        <dbReference type="ChEBI" id="CHEBI:18420"/>
    </cofactor>
    <text evidence="1">Binds 1 Mg(2+) ion per subunit.</text>
</comment>
<comment type="cofactor">
    <cofactor evidence="1">
        <name>Zn(2+)</name>
        <dbReference type="ChEBI" id="CHEBI:29105"/>
    </cofactor>
    <text evidence="1">Binds 2 Zn(2+) ions per subunit.</text>
</comment>
<comment type="subunit">
    <text evidence="1">The RNAP catalytic core consists of 2 alpha, 1 beta, 1 beta' and 1 omega subunit. When a sigma factor is associated with the core the holoenzyme is formed, which can initiate transcription.</text>
</comment>
<comment type="similarity">
    <text evidence="1">Belongs to the RNA polymerase beta' chain family.</text>
</comment>
<keyword id="KW-0240">DNA-directed RNA polymerase</keyword>
<keyword id="KW-0460">Magnesium</keyword>
<keyword id="KW-0479">Metal-binding</keyword>
<keyword id="KW-0548">Nucleotidyltransferase</keyword>
<keyword id="KW-0804">Transcription</keyword>
<keyword id="KW-0808">Transferase</keyword>
<keyword id="KW-0862">Zinc</keyword>
<accession>A5CUC6</accession>
<reference key="1">
    <citation type="journal article" date="2008" name="J. Bacteriol.">
        <title>The genome sequence of the tomato-pathogenic actinomycete Clavibacter michiganensis subsp. michiganensis NCPPB382 reveals a large island involved in pathogenicity.</title>
        <authorList>
            <person name="Gartemann K.-H."/>
            <person name="Abt B."/>
            <person name="Bekel T."/>
            <person name="Burger A."/>
            <person name="Engemann J."/>
            <person name="Fluegel M."/>
            <person name="Gaigalat L."/>
            <person name="Goesmann A."/>
            <person name="Graefen I."/>
            <person name="Kalinowski J."/>
            <person name="Kaup O."/>
            <person name="Kirchner O."/>
            <person name="Krause L."/>
            <person name="Linke B."/>
            <person name="McHardy A."/>
            <person name="Meyer F."/>
            <person name="Pohle S."/>
            <person name="Rueckert C."/>
            <person name="Schneiker S."/>
            <person name="Zellermann E.-M."/>
            <person name="Puehler A."/>
            <person name="Eichenlaub R."/>
            <person name="Kaiser O."/>
            <person name="Bartels D."/>
        </authorList>
    </citation>
    <scope>NUCLEOTIDE SEQUENCE [LARGE SCALE GENOMIC DNA]</scope>
    <source>
        <strain>NCPPB 382</strain>
    </source>
</reference>